<comment type="function">
    <text evidence="1">Binds the lower part of the 30S subunit head. Binds mRNA in the 70S ribosome, positioning it for translation.</text>
</comment>
<comment type="subunit">
    <text evidence="1">Part of the 30S ribosomal subunit. Forms a tight complex with proteins S10 and S14.</text>
</comment>
<comment type="similarity">
    <text evidence="1">Belongs to the universal ribosomal protein uS3 family.</text>
</comment>
<dbReference type="EMBL" id="CU928163">
    <property type="protein sequence ID" value="CAR14935.1"/>
    <property type="molecule type" value="Genomic_DNA"/>
</dbReference>
<dbReference type="RefSeq" id="WP_000529945.1">
    <property type="nucleotide sequence ID" value="NC_011751.1"/>
</dbReference>
<dbReference type="RefSeq" id="YP_002414440.1">
    <property type="nucleotide sequence ID" value="NC_011751.1"/>
</dbReference>
<dbReference type="SMR" id="B7NDT5"/>
<dbReference type="STRING" id="585056.ECUMN_3787"/>
<dbReference type="GeneID" id="97603663"/>
<dbReference type="KEGG" id="eum:ECUMN_3787"/>
<dbReference type="PATRIC" id="fig|585056.7.peg.3962"/>
<dbReference type="HOGENOM" id="CLU_058591_0_2_6"/>
<dbReference type="PRO" id="PR:B7NDT5"/>
<dbReference type="Proteomes" id="UP000007097">
    <property type="component" value="Chromosome"/>
</dbReference>
<dbReference type="GO" id="GO:0022627">
    <property type="term" value="C:cytosolic small ribosomal subunit"/>
    <property type="evidence" value="ECO:0007669"/>
    <property type="project" value="TreeGrafter"/>
</dbReference>
<dbReference type="GO" id="GO:0003729">
    <property type="term" value="F:mRNA binding"/>
    <property type="evidence" value="ECO:0007669"/>
    <property type="project" value="UniProtKB-UniRule"/>
</dbReference>
<dbReference type="GO" id="GO:0019843">
    <property type="term" value="F:rRNA binding"/>
    <property type="evidence" value="ECO:0007669"/>
    <property type="project" value="UniProtKB-UniRule"/>
</dbReference>
<dbReference type="GO" id="GO:0003735">
    <property type="term" value="F:structural constituent of ribosome"/>
    <property type="evidence" value="ECO:0007669"/>
    <property type="project" value="InterPro"/>
</dbReference>
<dbReference type="GO" id="GO:0006412">
    <property type="term" value="P:translation"/>
    <property type="evidence" value="ECO:0007669"/>
    <property type="project" value="UniProtKB-UniRule"/>
</dbReference>
<dbReference type="CDD" id="cd02412">
    <property type="entry name" value="KH-II_30S_S3"/>
    <property type="match status" value="1"/>
</dbReference>
<dbReference type="FunFam" id="3.30.1140.32:FF:000001">
    <property type="entry name" value="30S ribosomal protein S3"/>
    <property type="match status" value="1"/>
</dbReference>
<dbReference type="FunFam" id="3.30.300.20:FF:000001">
    <property type="entry name" value="30S ribosomal protein S3"/>
    <property type="match status" value="1"/>
</dbReference>
<dbReference type="Gene3D" id="3.30.300.20">
    <property type="match status" value="1"/>
</dbReference>
<dbReference type="Gene3D" id="3.30.1140.32">
    <property type="entry name" value="Ribosomal protein S3, C-terminal domain"/>
    <property type="match status" value="1"/>
</dbReference>
<dbReference type="HAMAP" id="MF_01309_B">
    <property type="entry name" value="Ribosomal_uS3_B"/>
    <property type="match status" value="1"/>
</dbReference>
<dbReference type="InterPro" id="IPR004087">
    <property type="entry name" value="KH_dom"/>
</dbReference>
<dbReference type="InterPro" id="IPR015946">
    <property type="entry name" value="KH_dom-like_a/b"/>
</dbReference>
<dbReference type="InterPro" id="IPR004044">
    <property type="entry name" value="KH_dom_type_2"/>
</dbReference>
<dbReference type="InterPro" id="IPR009019">
    <property type="entry name" value="KH_sf_prok-type"/>
</dbReference>
<dbReference type="InterPro" id="IPR036419">
    <property type="entry name" value="Ribosomal_S3_C_sf"/>
</dbReference>
<dbReference type="InterPro" id="IPR005704">
    <property type="entry name" value="Ribosomal_uS3_bac-typ"/>
</dbReference>
<dbReference type="InterPro" id="IPR001351">
    <property type="entry name" value="Ribosomal_uS3_C"/>
</dbReference>
<dbReference type="InterPro" id="IPR018280">
    <property type="entry name" value="Ribosomal_uS3_CS"/>
</dbReference>
<dbReference type="NCBIfam" id="TIGR01009">
    <property type="entry name" value="rpsC_bact"/>
    <property type="match status" value="1"/>
</dbReference>
<dbReference type="PANTHER" id="PTHR11760">
    <property type="entry name" value="30S/40S RIBOSOMAL PROTEIN S3"/>
    <property type="match status" value="1"/>
</dbReference>
<dbReference type="PANTHER" id="PTHR11760:SF19">
    <property type="entry name" value="SMALL RIBOSOMAL SUBUNIT PROTEIN US3C"/>
    <property type="match status" value="1"/>
</dbReference>
<dbReference type="Pfam" id="PF07650">
    <property type="entry name" value="KH_2"/>
    <property type="match status" value="1"/>
</dbReference>
<dbReference type="Pfam" id="PF00189">
    <property type="entry name" value="Ribosomal_S3_C"/>
    <property type="match status" value="1"/>
</dbReference>
<dbReference type="SMART" id="SM00322">
    <property type="entry name" value="KH"/>
    <property type="match status" value="1"/>
</dbReference>
<dbReference type="SUPFAM" id="SSF54814">
    <property type="entry name" value="Prokaryotic type KH domain (KH-domain type II)"/>
    <property type="match status" value="1"/>
</dbReference>
<dbReference type="SUPFAM" id="SSF54821">
    <property type="entry name" value="Ribosomal protein S3 C-terminal domain"/>
    <property type="match status" value="1"/>
</dbReference>
<dbReference type="PROSITE" id="PS50823">
    <property type="entry name" value="KH_TYPE_2"/>
    <property type="match status" value="1"/>
</dbReference>
<dbReference type="PROSITE" id="PS00548">
    <property type="entry name" value="RIBOSOMAL_S3"/>
    <property type="match status" value="1"/>
</dbReference>
<protein>
    <recommendedName>
        <fullName evidence="1">Small ribosomal subunit protein uS3</fullName>
    </recommendedName>
    <alternativeName>
        <fullName evidence="2">30S ribosomal protein S3</fullName>
    </alternativeName>
</protein>
<organism>
    <name type="scientific">Escherichia coli O17:K52:H18 (strain UMN026 / ExPEC)</name>
    <dbReference type="NCBI Taxonomy" id="585056"/>
    <lineage>
        <taxon>Bacteria</taxon>
        <taxon>Pseudomonadati</taxon>
        <taxon>Pseudomonadota</taxon>
        <taxon>Gammaproteobacteria</taxon>
        <taxon>Enterobacterales</taxon>
        <taxon>Enterobacteriaceae</taxon>
        <taxon>Escherichia</taxon>
    </lineage>
</organism>
<gene>
    <name evidence="1" type="primary">rpsC</name>
    <name type="ordered locus">ECUMN_3787</name>
</gene>
<proteinExistence type="inferred from homology"/>
<keyword id="KW-0687">Ribonucleoprotein</keyword>
<keyword id="KW-0689">Ribosomal protein</keyword>
<keyword id="KW-0694">RNA-binding</keyword>
<keyword id="KW-0699">rRNA-binding</keyword>
<reference key="1">
    <citation type="journal article" date="2009" name="PLoS Genet.">
        <title>Organised genome dynamics in the Escherichia coli species results in highly diverse adaptive paths.</title>
        <authorList>
            <person name="Touchon M."/>
            <person name="Hoede C."/>
            <person name="Tenaillon O."/>
            <person name="Barbe V."/>
            <person name="Baeriswyl S."/>
            <person name="Bidet P."/>
            <person name="Bingen E."/>
            <person name="Bonacorsi S."/>
            <person name="Bouchier C."/>
            <person name="Bouvet O."/>
            <person name="Calteau A."/>
            <person name="Chiapello H."/>
            <person name="Clermont O."/>
            <person name="Cruveiller S."/>
            <person name="Danchin A."/>
            <person name="Diard M."/>
            <person name="Dossat C."/>
            <person name="Karoui M.E."/>
            <person name="Frapy E."/>
            <person name="Garry L."/>
            <person name="Ghigo J.M."/>
            <person name="Gilles A.M."/>
            <person name="Johnson J."/>
            <person name="Le Bouguenec C."/>
            <person name="Lescat M."/>
            <person name="Mangenot S."/>
            <person name="Martinez-Jehanne V."/>
            <person name="Matic I."/>
            <person name="Nassif X."/>
            <person name="Oztas S."/>
            <person name="Petit M.A."/>
            <person name="Pichon C."/>
            <person name="Rouy Z."/>
            <person name="Ruf C.S."/>
            <person name="Schneider D."/>
            <person name="Tourret J."/>
            <person name="Vacherie B."/>
            <person name="Vallenet D."/>
            <person name="Medigue C."/>
            <person name="Rocha E.P.C."/>
            <person name="Denamur E."/>
        </authorList>
    </citation>
    <scope>NUCLEOTIDE SEQUENCE [LARGE SCALE GENOMIC DNA]</scope>
    <source>
        <strain>UMN026 / ExPEC</strain>
    </source>
</reference>
<evidence type="ECO:0000255" key="1">
    <source>
        <dbReference type="HAMAP-Rule" id="MF_01309"/>
    </source>
</evidence>
<evidence type="ECO:0000305" key="2"/>
<accession>B7NDT5</accession>
<feature type="chain" id="PRO_1000140964" description="Small ribosomal subunit protein uS3">
    <location>
        <begin position="1"/>
        <end position="233"/>
    </location>
</feature>
<feature type="domain" description="KH type-2" evidence="1">
    <location>
        <begin position="39"/>
        <end position="107"/>
    </location>
</feature>
<name>RS3_ECOLU</name>
<sequence>MGQKVHPNGIRLGIVKPWNSTWFANTKEFADNLDSDFKVRQYLTKELAKASVSRIVIERPAKSIRVTIHTARPGIVIGKKGEDVEKLRKVVADIAGVPAQINIAEVRKPELDAKLVADSITSQLERRVMFRRAMKRAVQNAMRLGAKGIKVEVSGRLGGAEIARTEWYREGRVPLHTLRADIDYNTSEAHTTYGVIGVKVWIFKGEILGGMAAVEQPEKPAAQPKKQQRKGRK</sequence>